<name>RNPA_STRS7</name>
<proteinExistence type="inferred from homology"/>
<evidence type="ECO:0000255" key="1">
    <source>
        <dbReference type="HAMAP-Rule" id="MF_00227"/>
    </source>
</evidence>
<keyword id="KW-0255">Endonuclease</keyword>
<keyword id="KW-0378">Hydrolase</keyword>
<keyword id="KW-0540">Nuclease</keyword>
<keyword id="KW-0694">RNA-binding</keyword>
<keyword id="KW-0819">tRNA processing</keyword>
<protein>
    <recommendedName>
        <fullName evidence="1">Ribonuclease P protein component</fullName>
        <shortName evidence="1">RNase P protein</shortName>
        <shortName evidence="1">RNaseP protein</shortName>
        <ecNumber evidence="1">3.1.26.5</ecNumber>
    </recommendedName>
    <alternativeName>
        <fullName evidence="1">Protein C5</fullName>
    </alternativeName>
</protein>
<dbReference type="EC" id="3.1.26.5" evidence="1"/>
<dbReference type="EMBL" id="FM204884">
    <property type="protein sequence ID" value="CAX00576.1"/>
    <property type="molecule type" value="Genomic_DNA"/>
</dbReference>
<dbReference type="SMR" id="C0MFG8"/>
<dbReference type="KEGG" id="seq:SZO_17360"/>
<dbReference type="eggNOG" id="COG0594">
    <property type="taxonomic scope" value="Bacteria"/>
</dbReference>
<dbReference type="HOGENOM" id="CLU_117179_9_1_9"/>
<dbReference type="Proteomes" id="UP000001368">
    <property type="component" value="Chromosome"/>
</dbReference>
<dbReference type="GO" id="GO:0030677">
    <property type="term" value="C:ribonuclease P complex"/>
    <property type="evidence" value="ECO:0007669"/>
    <property type="project" value="TreeGrafter"/>
</dbReference>
<dbReference type="GO" id="GO:0042781">
    <property type="term" value="F:3'-tRNA processing endoribonuclease activity"/>
    <property type="evidence" value="ECO:0007669"/>
    <property type="project" value="TreeGrafter"/>
</dbReference>
<dbReference type="GO" id="GO:0004526">
    <property type="term" value="F:ribonuclease P activity"/>
    <property type="evidence" value="ECO:0007669"/>
    <property type="project" value="UniProtKB-UniRule"/>
</dbReference>
<dbReference type="GO" id="GO:0000049">
    <property type="term" value="F:tRNA binding"/>
    <property type="evidence" value="ECO:0007669"/>
    <property type="project" value="UniProtKB-UniRule"/>
</dbReference>
<dbReference type="GO" id="GO:0001682">
    <property type="term" value="P:tRNA 5'-leader removal"/>
    <property type="evidence" value="ECO:0007669"/>
    <property type="project" value="UniProtKB-UniRule"/>
</dbReference>
<dbReference type="FunFam" id="3.30.230.10:FF:000021">
    <property type="entry name" value="Ribonuclease P protein component"/>
    <property type="match status" value="1"/>
</dbReference>
<dbReference type="Gene3D" id="3.30.230.10">
    <property type="match status" value="1"/>
</dbReference>
<dbReference type="HAMAP" id="MF_00227">
    <property type="entry name" value="RNase_P"/>
    <property type="match status" value="1"/>
</dbReference>
<dbReference type="InterPro" id="IPR020568">
    <property type="entry name" value="Ribosomal_Su5_D2-typ_SF"/>
</dbReference>
<dbReference type="InterPro" id="IPR014721">
    <property type="entry name" value="Ribsml_uS5_D2-typ_fold_subgr"/>
</dbReference>
<dbReference type="InterPro" id="IPR000100">
    <property type="entry name" value="RNase_P"/>
</dbReference>
<dbReference type="InterPro" id="IPR020539">
    <property type="entry name" value="RNase_P_CS"/>
</dbReference>
<dbReference type="NCBIfam" id="TIGR00188">
    <property type="entry name" value="rnpA"/>
    <property type="match status" value="1"/>
</dbReference>
<dbReference type="PANTHER" id="PTHR33992">
    <property type="entry name" value="RIBONUCLEASE P PROTEIN COMPONENT"/>
    <property type="match status" value="1"/>
</dbReference>
<dbReference type="PANTHER" id="PTHR33992:SF1">
    <property type="entry name" value="RIBONUCLEASE P PROTEIN COMPONENT"/>
    <property type="match status" value="1"/>
</dbReference>
<dbReference type="Pfam" id="PF00825">
    <property type="entry name" value="Ribonuclease_P"/>
    <property type="match status" value="1"/>
</dbReference>
<dbReference type="SUPFAM" id="SSF54211">
    <property type="entry name" value="Ribosomal protein S5 domain 2-like"/>
    <property type="match status" value="1"/>
</dbReference>
<dbReference type="PROSITE" id="PS00648">
    <property type="entry name" value="RIBONUCLEASE_P"/>
    <property type="match status" value="1"/>
</dbReference>
<accession>C0MFG8</accession>
<gene>
    <name evidence="1" type="primary">rnpA</name>
    <name type="ordered locus">SZO_17360</name>
</gene>
<comment type="function">
    <text evidence="1">RNaseP catalyzes the removal of the 5'-leader sequence from pre-tRNA to produce the mature 5'-terminus. It can also cleave other RNA substrates such as 4.5S RNA. The protein component plays an auxiliary but essential role in vivo by binding to the 5'-leader sequence and broadening the substrate specificity of the ribozyme.</text>
</comment>
<comment type="catalytic activity">
    <reaction evidence="1">
        <text>Endonucleolytic cleavage of RNA, removing 5'-extranucleotides from tRNA precursor.</text>
        <dbReference type="EC" id="3.1.26.5"/>
    </reaction>
</comment>
<comment type="subunit">
    <text evidence="1">Consists of a catalytic RNA component (M1 or rnpB) and a protein subunit.</text>
</comment>
<comment type="similarity">
    <text evidence="1">Belongs to the RnpA family.</text>
</comment>
<reference key="1">
    <citation type="journal article" date="2009" name="PLoS Pathog.">
        <title>Genomic evidence for the evolution of Streptococcus equi: host restriction, increased virulence, and genetic exchange with human pathogens.</title>
        <authorList>
            <person name="Holden M.T.G."/>
            <person name="Heather Z."/>
            <person name="Paillot R."/>
            <person name="Steward K.F."/>
            <person name="Webb K."/>
            <person name="Ainslie F."/>
            <person name="Jourdan T."/>
            <person name="Bason N.C."/>
            <person name="Holroyd N.E."/>
            <person name="Mungall K."/>
            <person name="Quail M.A."/>
            <person name="Sanders M."/>
            <person name="Simmonds M."/>
            <person name="Willey D."/>
            <person name="Brooks K."/>
            <person name="Aanensen D.M."/>
            <person name="Spratt B.G."/>
            <person name="Jolley K.A."/>
            <person name="Maiden M.C.J."/>
            <person name="Kehoe M."/>
            <person name="Chanter N."/>
            <person name="Bentley S.D."/>
            <person name="Robinson C."/>
            <person name="Maskell D.J."/>
            <person name="Parkhill J."/>
            <person name="Waller A.S."/>
        </authorList>
    </citation>
    <scope>NUCLEOTIDE SEQUENCE [LARGE SCALE GENOMIC DNA]</scope>
    <source>
        <strain>H70</strain>
    </source>
</reference>
<feature type="chain" id="PRO_1000204355" description="Ribonuclease P protein component">
    <location>
        <begin position="1"/>
        <end position="119"/>
    </location>
</feature>
<organism>
    <name type="scientific">Streptococcus equi subsp. zooepidemicus (strain H70)</name>
    <dbReference type="NCBI Taxonomy" id="553483"/>
    <lineage>
        <taxon>Bacteria</taxon>
        <taxon>Bacillati</taxon>
        <taxon>Bacillota</taxon>
        <taxon>Bacilli</taxon>
        <taxon>Lactobacillales</taxon>
        <taxon>Streptococcaceae</taxon>
        <taxon>Streptococcus</taxon>
    </lineage>
</organism>
<sequence length="119" mass="13852">MKKSYRVKREKDFQAIFKLGQSMANRKFVIYHLKGEHKHFRAGISVGKKLGNAVTRNAVKRKIRHVLMELGDHLKTEDFVVIARRGAEELDYQAVKQNLHHVLKLAKLLEEGFEIEKKS</sequence>